<accession>P45280</accession>
<reference key="1">
    <citation type="journal article" date="1995" name="Science">
        <title>Whole-genome random sequencing and assembly of Haemophilus influenzae Rd.</title>
        <authorList>
            <person name="Fleischmann R.D."/>
            <person name="Adams M.D."/>
            <person name="White O."/>
            <person name="Clayton R.A."/>
            <person name="Kirkness E.F."/>
            <person name="Kerlavage A.R."/>
            <person name="Bult C.J."/>
            <person name="Tomb J.-F."/>
            <person name="Dougherty B.A."/>
            <person name="Merrick J.M."/>
            <person name="McKenney K."/>
            <person name="Sutton G.G."/>
            <person name="FitzHugh W."/>
            <person name="Fields C.A."/>
            <person name="Gocayne J.D."/>
            <person name="Scott J.D."/>
            <person name="Shirley R."/>
            <person name="Liu L.-I."/>
            <person name="Glodek A."/>
            <person name="Kelley J.M."/>
            <person name="Weidman J.F."/>
            <person name="Phillips C.A."/>
            <person name="Spriggs T."/>
            <person name="Hedblom E."/>
            <person name="Cotton M.D."/>
            <person name="Utterback T.R."/>
            <person name="Hanna M.C."/>
            <person name="Nguyen D.T."/>
            <person name="Saudek D.M."/>
            <person name="Brandon R.C."/>
            <person name="Fine L.D."/>
            <person name="Fritchman J.L."/>
            <person name="Fuhrmann J.L."/>
            <person name="Geoghagen N.S.M."/>
            <person name="Gnehm C.L."/>
            <person name="McDonald L.A."/>
            <person name="Small K.V."/>
            <person name="Fraser C.M."/>
            <person name="Smith H.O."/>
            <person name="Venter J.C."/>
        </authorList>
    </citation>
    <scope>NUCLEOTIDE SEQUENCE [LARGE SCALE GENOMIC DNA]</scope>
    <source>
        <strain>ATCC 51907 / DSM 11121 / KW20 / Rd</strain>
    </source>
</reference>
<keyword id="KW-1003">Cell membrane</keyword>
<keyword id="KW-0472">Membrane</keyword>
<keyword id="KW-1185">Reference proteome</keyword>
<keyword id="KW-0812">Transmembrane</keyword>
<keyword id="KW-1133">Transmembrane helix</keyword>
<feature type="chain" id="PRO_0000161421" description="Uncharacterized membrane protein HI_1629">
    <location>
        <begin position="1"/>
        <end position="212"/>
    </location>
</feature>
<feature type="transmembrane region" description="Helical" evidence="1">
    <location>
        <begin position="20"/>
        <end position="40"/>
    </location>
</feature>
<feature type="transmembrane region" description="Helical" evidence="1">
    <location>
        <begin position="70"/>
        <end position="90"/>
    </location>
</feature>
<feature type="transmembrane region" description="Helical" evidence="1">
    <location>
        <begin position="155"/>
        <end position="175"/>
    </location>
</feature>
<feature type="transmembrane region" description="Helical" evidence="1">
    <location>
        <begin position="192"/>
        <end position="212"/>
    </location>
</feature>
<gene>
    <name type="ordered locus">HI_1629</name>
</gene>
<proteinExistence type="inferred from homology"/>
<sequence>MNQFFITSINIIKKQEQMEFLIGFFTEYGYWAVLFVLIICGFGVPIPEDITLVSGGVIAGLYPENVNSHLMLLVSMIGVLAGDSCMYWLGRIYGTKILRFRPIRRIVTLQRLRMVREKFSQYGNRVLFVARFLPGLRAPIYMVSGITRRVSYVRFVLIDFCAAIISVPIWIYLGELGAKNLDWLHTQIQKGQIVIYIFIGYLYYSFLEMEKI</sequence>
<evidence type="ECO:0000255" key="1"/>
<evidence type="ECO:0000305" key="2"/>
<comment type="subcellular location">
    <subcellularLocation>
        <location evidence="2">Cell membrane</location>
        <topology evidence="2">Multi-pass membrane protein</topology>
    </subcellularLocation>
</comment>
<comment type="similarity">
    <text evidence="2">Belongs to the DedA family.</text>
</comment>
<protein>
    <recommendedName>
        <fullName>Uncharacterized membrane protein HI_1629</fullName>
    </recommendedName>
</protein>
<dbReference type="EMBL" id="L42023">
    <property type="protein sequence ID" value="AAC23276.1"/>
    <property type="molecule type" value="Genomic_DNA"/>
</dbReference>
<dbReference type="PIR" id="D64133">
    <property type="entry name" value="D64133"/>
</dbReference>
<dbReference type="RefSeq" id="NP_439771.2">
    <property type="nucleotide sequence ID" value="NC_000907.1"/>
</dbReference>
<dbReference type="STRING" id="71421.HI_1629"/>
<dbReference type="EnsemblBacteria" id="AAC23276">
    <property type="protein sequence ID" value="AAC23276"/>
    <property type="gene ID" value="HI_1629"/>
</dbReference>
<dbReference type="KEGG" id="hin:HI_1629"/>
<dbReference type="PATRIC" id="fig|71421.8.peg.1704"/>
<dbReference type="eggNOG" id="COG0586">
    <property type="taxonomic scope" value="Bacteria"/>
</dbReference>
<dbReference type="HOGENOM" id="CLU_044208_4_1_6"/>
<dbReference type="OrthoDB" id="21108at2"/>
<dbReference type="PhylomeDB" id="P45280"/>
<dbReference type="Proteomes" id="UP000000579">
    <property type="component" value="Chromosome"/>
</dbReference>
<dbReference type="GO" id="GO:0005886">
    <property type="term" value="C:plasma membrane"/>
    <property type="evidence" value="ECO:0007669"/>
    <property type="project" value="UniProtKB-SubCell"/>
</dbReference>
<dbReference type="InterPro" id="IPR032818">
    <property type="entry name" value="DedA-like"/>
</dbReference>
<dbReference type="InterPro" id="IPR032816">
    <property type="entry name" value="VTT_dom"/>
</dbReference>
<dbReference type="PANTHER" id="PTHR30353">
    <property type="entry name" value="INNER MEMBRANE PROTEIN DEDA-RELATED"/>
    <property type="match status" value="1"/>
</dbReference>
<dbReference type="PANTHER" id="PTHR30353:SF15">
    <property type="entry name" value="INNER MEMBRANE PROTEIN YABI"/>
    <property type="match status" value="1"/>
</dbReference>
<dbReference type="Pfam" id="PF09335">
    <property type="entry name" value="VTT_dom"/>
    <property type="match status" value="1"/>
</dbReference>
<name>Y1629_HAEIN</name>
<organism>
    <name type="scientific">Haemophilus influenzae (strain ATCC 51907 / DSM 11121 / KW20 / Rd)</name>
    <dbReference type="NCBI Taxonomy" id="71421"/>
    <lineage>
        <taxon>Bacteria</taxon>
        <taxon>Pseudomonadati</taxon>
        <taxon>Pseudomonadota</taxon>
        <taxon>Gammaproteobacteria</taxon>
        <taxon>Pasteurellales</taxon>
        <taxon>Pasteurellaceae</taxon>
        <taxon>Haemophilus</taxon>
    </lineage>
</organism>